<sequence>MISSKTSFIALIGNPVSHSFSPIMQNAAFQYLGLDLIYFAIPCKDEDLELVLNSLKKINCKGLNITIPHKEKVFNLCSEISPIARKLKAINTLKLNSENEWSATNTDLEGFIYPLKNLNLAKKKSIVLGSGGAAKSVIQGLINLNLSKISVIGRNKSSLDELIKNFGNQIELHSFLSNDNQTQNLIEEADLIINTTPVGMKTAKNEMNLLPYGDYFWRSLNSKTIVYDLIYNPAPTHLLKFSANKGCMTIDGLQMLVAQGLKSLSFWTNGLEVPFHIMNDALKNHL</sequence>
<gene>
    <name evidence="1" type="primary">aroE</name>
    <name type="ordered locus">P9301_18961</name>
</gene>
<keyword id="KW-0028">Amino-acid biosynthesis</keyword>
<keyword id="KW-0057">Aromatic amino acid biosynthesis</keyword>
<keyword id="KW-0521">NADP</keyword>
<keyword id="KW-0560">Oxidoreductase</keyword>
<keyword id="KW-1185">Reference proteome</keyword>
<proteinExistence type="inferred from homology"/>
<organism>
    <name type="scientific">Prochlorococcus marinus (strain MIT 9301)</name>
    <dbReference type="NCBI Taxonomy" id="167546"/>
    <lineage>
        <taxon>Bacteria</taxon>
        <taxon>Bacillati</taxon>
        <taxon>Cyanobacteriota</taxon>
        <taxon>Cyanophyceae</taxon>
        <taxon>Synechococcales</taxon>
        <taxon>Prochlorococcaceae</taxon>
        <taxon>Prochlorococcus</taxon>
    </lineage>
</organism>
<dbReference type="EC" id="1.1.1.25" evidence="1"/>
<dbReference type="EMBL" id="CP000576">
    <property type="protein sequence ID" value="ABO18519.1"/>
    <property type="molecule type" value="Genomic_DNA"/>
</dbReference>
<dbReference type="RefSeq" id="WP_011863800.1">
    <property type="nucleotide sequence ID" value="NC_009091.1"/>
</dbReference>
<dbReference type="SMR" id="A3PFJ4"/>
<dbReference type="STRING" id="167546.P9301_18961"/>
<dbReference type="KEGG" id="pmg:P9301_18961"/>
<dbReference type="eggNOG" id="COG0169">
    <property type="taxonomic scope" value="Bacteria"/>
</dbReference>
<dbReference type="HOGENOM" id="CLU_044063_4_1_3"/>
<dbReference type="OrthoDB" id="9792692at2"/>
<dbReference type="UniPathway" id="UPA00053">
    <property type="reaction ID" value="UER00087"/>
</dbReference>
<dbReference type="Proteomes" id="UP000001430">
    <property type="component" value="Chromosome"/>
</dbReference>
<dbReference type="GO" id="GO:0005829">
    <property type="term" value="C:cytosol"/>
    <property type="evidence" value="ECO:0007669"/>
    <property type="project" value="TreeGrafter"/>
</dbReference>
<dbReference type="GO" id="GO:0050661">
    <property type="term" value="F:NADP binding"/>
    <property type="evidence" value="ECO:0007669"/>
    <property type="project" value="InterPro"/>
</dbReference>
<dbReference type="GO" id="GO:0004764">
    <property type="term" value="F:shikimate 3-dehydrogenase (NADP+) activity"/>
    <property type="evidence" value="ECO:0007669"/>
    <property type="project" value="UniProtKB-UniRule"/>
</dbReference>
<dbReference type="GO" id="GO:0008652">
    <property type="term" value="P:amino acid biosynthetic process"/>
    <property type="evidence" value="ECO:0007669"/>
    <property type="project" value="UniProtKB-KW"/>
</dbReference>
<dbReference type="GO" id="GO:0009073">
    <property type="term" value="P:aromatic amino acid family biosynthetic process"/>
    <property type="evidence" value="ECO:0007669"/>
    <property type="project" value="UniProtKB-KW"/>
</dbReference>
<dbReference type="GO" id="GO:0009423">
    <property type="term" value="P:chorismate biosynthetic process"/>
    <property type="evidence" value="ECO:0007669"/>
    <property type="project" value="UniProtKB-UniRule"/>
</dbReference>
<dbReference type="GO" id="GO:0019632">
    <property type="term" value="P:shikimate metabolic process"/>
    <property type="evidence" value="ECO:0007669"/>
    <property type="project" value="InterPro"/>
</dbReference>
<dbReference type="CDD" id="cd01065">
    <property type="entry name" value="NAD_bind_Shikimate_DH"/>
    <property type="match status" value="1"/>
</dbReference>
<dbReference type="Gene3D" id="3.40.50.10860">
    <property type="entry name" value="Leucine Dehydrogenase, chain A, domain 1"/>
    <property type="match status" value="1"/>
</dbReference>
<dbReference type="Gene3D" id="3.40.50.720">
    <property type="entry name" value="NAD(P)-binding Rossmann-like Domain"/>
    <property type="match status" value="1"/>
</dbReference>
<dbReference type="HAMAP" id="MF_00222">
    <property type="entry name" value="Shikimate_DH_AroE"/>
    <property type="match status" value="1"/>
</dbReference>
<dbReference type="InterPro" id="IPR046346">
    <property type="entry name" value="Aminoacid_DH-like_N_sf"/>
</dbReference>
<dbReference type="InterPro" id="IPR036291">
    <property type="entry name" value="NAD(P)-bd_dom_sf"/>
</dbReference>
<dbReference type="InterPro" id="IPR041121">
    <property type="entry name" value="SDH_C"/>
</dbReference>
<dbReference type="InterPro" id="IPR011342">
    <property type="entry name" value="Shikimate_DH"/>
</dbReference>
<dbReference type="InterPro" id="IPR013708">
    <property type="entry name" value="Shikimate_DH-bd_N"/>
</dbReference>
<dbReference type="InterPro" id="IPR022893">
    <property type="entry name" value="Shikimate_DH_fam"/>
</dbReference>
<dbReference type="InterPro" id="IPR006151">
    <property type="entry name" value="Shikm_DH/Glu-tRNA_Rdtase"/>
</dbReference>
<dbReference type="NCBIfam" id="TIGR00507">
    <property type="entry name" value="aroE"/>
    <property type="match status" value="1"/>
</dbReference>
<dbReference type="NCBIfam" id="NF001314">
    <property type="entry name" value="PRK00258.2-2"/>
    <property type="match status" value="1"/>
</dbReference>
<dbReference type="PANTHER" id="PTHR21089:SF1">
    <property type="entry name" value="BIFUNCTIONAL 3-DEHYDROQUINATE DEHYDRATASE_SHIKIMATE DEHYDROGENASE, CHLOROPLASTIC"/>
    <property type="match status" value="1"/>
</dbReference>
<dbReference type="PANTHER" id="PTHR21089">
    <property type="entry name" value="SHIKIMATE DEHYDROGENASE"/>
    <property type="match status" value="1"/>
</dbReference>
<dbReference type="Pfam" id="PF18317">
    <property type="entry name" value="SDH_C"/>
    <property type="match status" value="1"/>
</dbReference>
<dbReference type="Pfam" id="PF01488">
    <property type="entry name" value="Shikimate_DH"/>
    <property type="match status" value="1"/>
</dbReference>
<dbReference type="Pfam" id="PF08501">
    <property type="entry name" value="Shikimate_dh_N"/>
    <property type="match status" value="1"/>
</dbReference>
<dbReference type="SUPFAM" id="SSF53223">
    <property type="entry name" value="Aminoacid dehydrogenase-like, N-terminal domain"/>
    <property type="match status" value="1"/>
</dbReference>
<dbReference type="SUPFAM" id="SSF51735">
    <property type="entry name" value="NAD(P)-binding Rossmann-fold domains"/>
    <property type="match status" value="1"/>
</dbReference>
<comment type="function">
    <text evidence="1">Involved in the biosynthesis of the chorismate, which leads to the biosynthesis of aromatic amino acids. Catalyzes the reversible NADPH linked reduction of 3-dehydroshikimate (DHSA) to yield shikimate (SA).</text>
</comment>
<comment type="catalytic activity">
    <reaction evidence="1">
        <text>shikimate + NADP(+) = 3-dehydroshikimate + NADPH + H(+)</text>
        <dbReference type="Rhea" id="RHEA:17737"/>
        <dbReference type="ChEBI" id="CHEBI:15378"/>
        <dbReference type="ChEBI" id="CHEBI:16630"/>
        <dbReference type="ChEBI" id="CHEBI:36208"/>
        <dbReference type="ChEBI" id="CHEBI:57783"/>
        <dbReference type="ChEBI" id="CHEBI:58349"/>
        <dbReference type="EC" id="1.1.1.25"/>
    </reaction>
</comment>
<comment type="pathway">
    <text evidence="1">Metabolic intermediate biosynthesis; chorismate biosynthesis; chorismate from D-erythrose 4-phosphate and phosphoenolpyruvate: step 4/7.</text>
</comment>
<comment type="subunit">
    <text evidence="1">Homodimer.</text>
</comment>
<comment type="similarity">
    <text evidence="1">Belongs to the shikimate dehydrogenase family.</text>
</comment>
<evidence type="ECO:0000255" key="1">
    <source>
        <dbReference type="HAMAP-Rule" id="MF_00222"/>
    </source>
</evidence>
<accession>A3PFJ4</accession>
<feature type="chain" id="PRO_0000325147" description="Shikimate dehydrogenase (NADP(+))">
    <location>
        <begin position="1"/>
        <end position="286"/>
    </location>
</feature>
<feature type="active site" description="Proton acceptor" evidence="1">
    <location>
        <position position="70"/>
    </location>
</feature>
<feature type="binding site" evidence="1">
    <location>
        <begin position="19"/>
        <end position="21"/>
    </location>
    <ligand>
        <name>shikimate</name>
        <dbReference type="ChEBI" id="CHEBI:36208"/>
    </ligand>
</feature>
<feature type="binding site" evidence="1">
    <location>
        <position position="66"/>
    </location>
    <ligand>
        <name>shikimate</name>
        <dbReference type="ChEBI" id="CHEBI:36208"/>
    </ligand>
</feature>
<feature type="binding site" evidence="1">
    <location>
        <position position="91"/>
    </location>
    <ligand>
        <name>shikimate</name>
        <dbReference type="ChEBI" id="CHEBI:36208"/>
    </ligand>
</feature>
<feature type="binding site" evidence="1">
    <location>
        <position position="107"/>
    </location>
    <ligand>
        <name>shikimate</name>
        <dbReference type="ChEBI" id="CHEBI:36208"/>
    </ligand>
</feature>
<feature type="binding site" evidence="1">
    <location>
        <begin position="129"/>
        <end position="133"/>
    </location>
    <ligand>
        <name>NADP(+)</name>
        <dbReference type="ChEBI" id="CHEBI:58349"/>
    </ligand>
</feature>
<feature type="binding site" evidence="1">
    <location>
        <position position="229"/>
    </location>
    <ligand>
        <name>NADP(+)</name>
        <dbReference type="ChEBI" id="CHEBI:58349"/>
    </ligand>
</feature>
<feature type="binding site" evidence="1">
    <location>
        <position position="231"/>
    </location>
    <ligand>
        <name>shikimate</name>
        <dbReference type="ChEBI" id="CHEBI:36208"/>
    </ligand>
</feature>
<feature type="binding site" evidence="1">
    <location>
        <position position="252"/>
    </location>
    <ligand>
        <name>NADP(+)</name>
        <dbReference type="ChEBI" id="CHEBI:58349"/>
    </ligand>
</feature>
<protein>
    <recommendedName>
        <fullName evidence="1">Shikimate dehydrogenase (NADP(+))</fullName>
        <shortName evidence="1">SDH</shortName>
        <ecNumber evidence="1">1.1.1.25</ecNumber>
    </recommendedName>
</protein>
<reference key="1">
    <citation type="journal article" date="2007" name="PLoS Genet.">
        <title>Patterns and implications of gene gain and loss in the evolution of Prochlorococcus.</title>
        <authorList>
            <person name="Kettler G.C."/>
            <person name="Martiny A.C."/>
            <person name="Huang K."/>
            <person name="Zucker J."/>
            <person name="Coleman M.L."/>
            <person name="Rodrigue S."/>
            <person name="Chen F."/>
            <person name="Lapidus A."/>
            <person name="Ferriera S."/>
            <person name="Johnson J."/>
            <person name="Steglich C."/>
            <person name="Church G.M."/>
            <person name="Richardson P."/>
            <person name="Chisholm S.W."/>
        </authorList>
    </citation>
    <scope>NUCLEOTIDE SEQUENCE [LARGE SCALE GENOMIC DNA]</scope>
    <source>
        <strain>MIT 9301</strain>
    </source>
</reference>
<name>AROE_PROM0</name>